<feature type="chain" id="PRO_0000101489" description="Ribosomal RNA small subunit methyltransferase A">
    <location>
        <begin position="1"/>
        <end position="274"/>
    </location>
</feature>
<feature type="binding site" evidence="1">
    <location>
        <position position="26"/>
    </location>
    <ligand>
        <name>S-adenosyl-L-methionine</name>
        <dbReference type="ChEBI" id="CHEBI:59789"/>
    </ligand>
</feature>
<feature type="binding site" evidence="1">
    <location>
        <position position="28"/>
    </location>
    <ligand>
        <name>S-adenosyl-L-methionine</name>
        <dbReference type="ChEBI" id="CHEBI:59789"/>
    </ligand>
</feature>
<feature type="binding site" evidence="1">
    <location>
        <position position="53"/>
    </location>
    <ligand>
        <name>S-adenosyl-L-methionine</name>
        <dbReference type="ChEBI" id="CHEBI:59789"/>
    </ligand>
</feature>
<feature type="binding site" evidence="1">
    <location>
        <position position="74"/>
    </location>
    <ligand>
        <name>S-adenosyl-L-methionine</name>
        <dbReference type="ChEBI" id="CHEBI:59789"/>
    </ligand>
</feature>
<feature type="binding site" evidence="1">
    <location>
        <position position="94"/>
    </location>
    <ligand>
        <name>S-adenosyl-L-methionine</name>
        <dbReference type="ChEBI" id="CHEBI:59789"/>
    </ligand>
</feature>
<feature type="binding site" evidence="1">
    <location>
        <position position="114"/>
    </location>
    <ligand>
        <name>S-adenosyl-L-methionine</name>
        <dbReference type="ChEBI" id="CHEBI:59789"/>
    </ligand>
</feature>
<organism>
    <name type="scientific">Bdellovibrio bacteriovorus (strain ATCC 15356 / DSM 50701 / NCIMB 9529 / HD100)</name>
    <dbReference type="NCBI Taxonomy" id="264462"/>
    <lineage>
        <taxon>Bacteria</taxon>
        <taxon>Pseudomonadati</taxon>
        <taxon>Bdellovibrionota</taxon>
        <taxon>Bdellovibrionia</taxon>
        <taxon>Bdellovibrionales</taxon>
        <taxon>Pseudobdellovibrionaceae</taxon>
        <taxon>Bdellovibrio</taxon>
    </lineage>
</organism>
<gene>
    <name evidence="1" type="primary">rsmA</name>
    <name evidence="1" type="synonym">ksgA</name>
    <name type="ordered locus">Bd0637</name>
</gene>
<keyword id="KW-0963">Cytoplasm</keyword>
<keyword id="KW-0489">Methyltransferase</keyword>
<keyword id="KW-1185">Reference proteome</keyword>
<keyword id="KW-0694">RNA-binding</keyword>
<keyword id="KW-0698">rRNA processing</keyword>
<keyword id="KW-0949">S-adenosyl-L-methionine</keyword>
<keyword id="KW-0808">Transferase</keyword>
<proteinExistence type="inferred from homology"/>
<name>RSMA_BDEBA</name>
<comment type="function">
    <text evidence="1">Specifically dimethylates two adjacent adenosines (A1518 and A1519) in the loop of a conserved hairpin near the 3'-end of 16S rRNA in the 30S particle. May play a critical role in biogenesis of 30S subunits.</text>
</comment>
<comment type="catalytic activity">
    <reaction evidence="1">
        <text>adenosine(1518)/adenosine(1519) in 16S rRNA + 4 S-adenosyl-L-methionine = N(6)-dimethyladenosine(1518)/N(6)-dimethyladenosine(1519) in 16S rRNA + 4 S-adenosyl-L-homocysteine + 4 H(+)</text>
        <dbReference type="Rhea" id="RHEA:19609"/>
        <dbReference type="Rhea" id="RHEA-COMP:10232"/>
        <dbReference type="Rhea" id="RHEA-COMP:10233"/>
        <dbReference type="ChEBI" id="CHEBI:15378"/>
        <dbReference type="ChEBI" id="CHEBI:57856"/>
        <dbReference type="ChEBI" id="CHEBI:59789"/>
        <dbReference type="ChEBI" id="CHEBI:74411"/>
        <dbReference type="ChEBI" id="CHEBI:74493"/>
        <dbReference type="EC" id="2.1.1.182"/>
    </reaction>
</comment>
<comment type="subcellular location">
    <subcellularLocation>
        <location evidence="1">Cytoplasm</location>
    </subcellularLocation>
</comment>
<comment type="similarity">
    <text evidence="1">Belongs to the class I-like SAM-binding methyltransferase superfamily. rRNA adenine N(6)-methyltransferase family. RsmA subfamily.</text>
</comment>
<reference key="1">
    <citation type="journal article" date="2004" name="Science">
        <title>A predator unmasked: life cycle of Bdellovibrio bacteriovorus from a genomic perspective.</title>
        <authorList>
            <person name="Rendulic S."/>
            <person name="Jagtap P."/>
            <person name="Rosinus A."/>
            <person name="Eppinger M."/>
            <person name="Baar C."/>
            <person name="Lanz C."/>
            <person name="Keller H."/>
            <person name="Lambert C."/>
            <person name="Evans K.J."/>
            <person name="Goesmann A."/>
            <person name="Meyer F."/>
            <person name="Sockett R.E."/>
            <person name="Schuster S.C."/>
        </authorList>
    </citation>
    <scope>NUCLEOTIDE SEQUENCE [LARGE SCALE GENOMIC DNA]</scope>
    <source>
        <strain>ATCC 15356 / DSM 50701 / NCIMB 9529 / HD100</strain>
    </source>
</reference>
<evidence type="ECO:0000255" key="1">
    <source>
        <dbReference type="HAMAP-Rule" id="MF_00607"/>
    </source>
</evidence>
<sequence length="274" mass="30980">MSYSRERLQRAQEAMGIAAKKSLGQNFLVSDTVINRIIDQVKAFAPEELVEVGPGPGALTDLLLELNLPLQLIELDSAIAAYWREKGLTVIEQDALRLDWKQFYTGKRVVFVSNLPYQISSSIVIERSLENEGVAAMVLMFQKEVAQKIRGTVDSDLYGLLSVYAQAFWKIETVTDAGPRDFQPPPKVASRVLSFERIESEVKNRKAFLTFVKCAFAQRRKLLKKNLSGLLSQKKLTEEQMVGWLAELGFKETARAEELSPKQFVALYKHFGFE</sequence>
<accession>Q6MQ47</accession>
<protein>
    <recommendedName>
        <fullName evidence="1">Ribosomal RNA small subunit methyltransferase A</fullName>
        <ecNumber evidence="1">2.1.1.182</ecNumber>
    </recommendedName>
    <alternativeName>
        <fullName evidence="1">16S rRNA (adenine(1518)-N(6)/adenine(1519)-N(6))-dimethyltransferase</fullName>
    </alternativeName>
    <alternativeName>
        <fullName evidence="1">16S rRNA dimethyladenosine transferase</fullName>
    </alternativeName>
    <alternativeName>
        <fullName evidence="1">16S rRNA dimethylase</fullName>
    </alternativeName>
    <alternativeName>
        <fullName evidence="1">S-adenosylmethionine-6-N', N'-adenosyl(rRNA) dimethyltransferase</fullName>
    </alternativeName>
</protein>
<dbReference type="EC" id="2.1.1.182" evidence="1"/>
<dbReference type="EMBL" id="BX842647">
    <property type="protein sequence ID" value="CAE78600.1"/>
    <property type="molecule type" value="Genomic_DNA"/>
</dbReference>
<dbReference type="RefSeq" id="WP_011163202.1">
    <property type="nucleotide sequence ID" value="NC_005363.1"/>
</dbReference>
<dbReference type="SMR" id="Q6MQ47"/>
<dbReference type="STRING" id="264462.Bd0637"/>
<dbReference type="GeneID" id="93011729"/>
<dbReference type="KEGG" id="bba:Bd0637"/>
<dbReference type="eggNOG" id="COG0030">
    <property type="taxonomic scope" value="Bacteria"/>
</dbReference>
<dbReference type="HOGENOM" id="CLU_041220_0_2_7"/>
<dbReference type="Proteomes" id="UP000008080">
    <property type="component" value="Chromosome"/>
</dbReference>
<dbReference type="GO" id="GO:0005829">
    <property type="term" value="C:cytosol"/>
    <property type="evidence" value="ECO:0007669"/>
    <property type="project" value="TreeGrafter"/>
</dbReference>
<dbReference type="GO" id="GO:0052908">
    <property type="term" value="F:16S rRNA (adenine(1518)-N(6)/adenine(1519)-N(6))-dimethyltransferase activity"/>
    <property type="evidence" value="ECO:0007669"/>
    <property type="project" value="UniProtKB-EC"/>
</dbReference>
<dbReference type="GO" id="GO:0003723">
    <property type="term" value="F:RNA binding"/>
    <property type="evidence" value="ECO:0007669"/>
    <property type="project" value="UniProtKB-KW"/>
</dbReference>
<dbReference type="Gene3D" id="1.10.8.100">
    <property type="entry name" value="Ribosomal RNA adenine dimethylase-like, domain 2"/>
    <property type="match status" value="1"/>
</dbReference>
<dbReference type="Gene3D" id="3.40.50.150">
    <property type="entry name" value="Vaccinia Virus protein VP39"/>
    <property type="match status" value="1"/>
</dbReference>
<dbReference type="HAMAP" id="MF_00607">
    <property type="entry name" value="16SrRNA_methyltr_A"/>
    <property type="match status" value="1"/>
</dbReference>
<dbReference type="InterPro" id="IPR001737">
    <property type="entry name" value="KsgA/Erm"/>
</dbReference>
<dbReference type="InterPro" id="IPR023165">
    <property type="entry name" value="rRNA_Ade_diMease-like_C"/>
</dbReference>
<dbReference type="InterPro" id="IPR020596">
    <property type="entry name" value="rRNA_Ade_Mease_Trfase_CS"/>
</dbReference>
<dbReference type="InterPro" id="IPR020598">
    <property type="entry name" value="rRNA_Ade_methylase_Trfase_N"/>
</dbReference>
<dbReference type="InterPro" id="IPR011530">
    <property type="entry name" value="rRNA_adenine_dimethylase"/>
</dbReference>
<dbReference type="InterPro" id="IPR029063">
    <property type="entry name" value="SAM-dependent_MTases_sf"/>
</dbReference>
<dbReference type="NCBIfam" id="TIGR00755">
    <property type="entry name" value="ksgA"/>
    <property type="match status" value="1"/>
</dbReference>
<dbReference type="PANTHER" id="PTHR11727">
    <property type="entry name" value="DIMETHYLADENOSINE TRANSFERASE"/>
    <property type="match status" value="1"/>
</dbReference>
<dbReference type="PANTHER" id="PTHR11727:SF7">
    <property type="entry name" value="DIMETHYLADENOSINE TRANSFERASE-RELATED"/>
    <property type="match status" value="1"/>
</dbReference>
<dbReference type="Pfam" id="PF00398">
    <property type="entry name" value="RrnaAD"/>
    <property type="match status" value="1"/>
</dbReference>
<dbReference type="SMART" id="SM00650">
    <property type="entry name" value="rADc"/>
    <property type="match status" value="1"/>
</dbReference>
<dbReference type="SUPFAM" id="SSF53335">
    <property type="entry name" value="S-adenosyl-L-methionine-dependent methyltransferases"/>
    <property type="match status" value="1"/>
</dbReference>
<dbReference type="PROSITE" id="PS01131">
    <property type="entry name" value="RRNA_A_DIMETH"/>
    <property type="match status" value="1"/>
</dbReference>
<dbReference type="PROSITE" id="PS51689">
    <property type="entry name" value="SAM_RNA_A_N6_MT"/>
    <property type="match status" value="1"/>
</dbReference>